<name>LPXK_AZOSB</name>
<gene>
    <name evidence="1" type="primary">lpxK</name>
    <name type="ordered locus">azo1470</name>
</gene>
<comment type="function">
    <text evidence="1">Transfers the gamma-phosphate of ATP to the 4'-position of a tetraacyldisaccharide 1-phosphate intermediate (termed DS-1-P) to form tetraacyldisaccharide 1,4'-bis-phosphate (lipid IVA).</text>
</comment>
<comment type="catalytic activity">
    <reaction evidence="1">
        <text>a lipid A disaccharide + ATP = a lipid IVA + ADP + H(+)</text>
        <dbReference type="Rhea" id="RHEA:67840"/>
        <dbReference type="ChEBI" id="CHEBI:15378"/>
        <dbReference type="ChEBI" id="CHEBI:30616"/>
        <dbReference type="ChEBI" id="CHEBI:176343"/>
        <dbReference type="ChEBI" id="CHEBI:176425"/>
        <dbReference type="ChEBI" id="CHEBI:456216"/>
        <dbReference type="EC" id="2.7.1.130"/>
    </reaction>
</comment>
<comment type="pathway">
    <text evidence="1">Glycolipid biosynthesis; lipid IV(A) biosynthesis; lipid IV(A) from (3R)-3-hydroxytetradecanoyl-[acyl-carrier-protein] and UDP-N-acetyl-alpha-D-glucosamine: step 6/6.</text>
</comment>
<comment type="similarity">
    <text evidence="1">Belongs to the LpxK family.</text>
</comment>
<reference key="1">
    <citation type="journal article" date="2006" name="Nat. Biotechnol.">
        <title>Complete genome of the mutualistic, N2-fixing grass endophyte Azoarcus sp. strain BH72.</title>
        <authorList>
            <person name="Krause A."/>
            <person name="Ramakumar A."/>
            <person name="Bartels D."/>
            <person name="Battistoni F."/>
            <person name="Bekel T."/>
            <person name="Boch J."/>
            <person name="Boehm M."/>
            <person name="Friedrich F."/>
            <person name="Hurek T."/>
            <person name="Krause L."/>
            <person name="Linke B."/>
            <person name="McHardy A.C."/>
            <person name="Sarkar A."/>
            <person name="Schneiker S."/>
            <person name="Syed A.A."/>
            <person name="Thauer R."/>
            <person name="Vorhoelter F.-J."/>
            <person name="Weidner S."/>
            <person name="Puehler A."/>
            <person name="Reinhold-Hurek B."/>
            <person name="Kaiser O."/>
            <person name="Goesmann A."/>
        </authorList>
    </citation>
    <scope>NUCLEOTIDE SEQUENCE [LARGE SCALE GENOMIC DNA]</scope>
    <source>
        <strain>BH72</strain>
    </source>
</reference>
<sequence length="341" mass="36421">MAAARGAMPTAPSYWRSRGPRALLLYPLSLLFGLLAALRRRLYRAGLLSQVRLPVKVIVVGNIAVGGSGKTPVVAWLVEQLRAAGWHPGIISRGHGGSARGVLEVVASGDAGVCGDEPLLLARLTGVPVFVGRDRPAAAAALLQAHPECDVIVSDDGMQHYRLARDLELAVVDPATLGNRWLLPAGPLREPVGRLDRVDLVIRHGDEGELPPRLGARAVPMRLVGDGFRGVADPARRCEASAFRGRRVHAVAGIGRPQRFFDQLAAMGLDVVPHPFPDHHRFVAADLDFAPGEPKLMTSKDAVKCAPFAPADAWEFPVTAEIGSGAAERILERLQHGRPPA</sequence>
<feature type="chain" id="PRO_0000291194" description="Tetraacyldisaccharide 4'-kinase">
    <location>
        <begin position="1"/>
        <end position="341"/>
    </location>
</feature>
<feature type="binding site" evidence="1">
    <location>
        <begin position="64"/>
        <end position="71"/>
    </location>
    <ligand>
        <name>ATP</name>
        <dbReference type="ChEBI" id="CHEBI:30616"/>
    </ligand>
</feature>
<evidence type="ECO:0000255" key="1">
    <source>
        <dbReference type="HAMAP-Rule" id="MF_00409"/>
    </source>
</evidence>
<protein>
    <recommendedName>
        <fullName evidence="1">Tetraacyldisaccharide 4'-kinase</fullName>
        <ecNumber evidence="1">2.7.1.130</ecNumber>
    </recommendedName>
    <alternativeName>
        <fullName evidence="1">Lipid A 4'-kinase</fullName>
    </alternativeName>
</protein>
<proteinExistence type="inferred from homology"/>
<accession>A1K5I2</accession>
<keyword id="KW-0067">ATP-binding</keyword>
<keyword id="KW-0418">Kinase</keyword>
<keyword id="KW-0441">Lipid A biosynthesis</keyword>
<keyword id="KW-0444">Lipid biosynthesis</keyword>
<keyword id="KW-0443">Lipid metabolism</keyword>
<keyword id="KW-0547">Nucleotide-binding</keyword>
<keyword id="KW-1185">Reference proteome</keyword>
<keyword id="KW-0808">Transferase</keyword>
<dbReference type="EC" id="2.7.1.130" evidence="1"/>
<dbReference type="EMBL" id="AM406670">
    <property type="protein sequence ID" value="CAL94087.1"/>
    <property type="molecule type" value="Genomic_DNA"/>
</dbReference>
<dbReference type="RefSeq" id="WP_011765203.1">
    <property type="nucleotide sequence ID" value="NC_008702.1"/>
</dbReference>
<dbReference type="SMR" id="A1K5I2"/>
<dbReference type="STRING" id="62928.azo1470"/>
<dbReference type="KEGG" id="azo:azo1470"/>
<dbReference type="eggNOG" id="COG1663">
    <property type="taxonomic scope" value="Bacteria"/>
</dbReference>
<dbReference type="HOGENOM" id="CLU_038816_2_0_4"/>
<dbReference type="UniPathway" id="UPA00359">
    <property type="reaction ID" value="UER00482"/>
</dbReference>
<dbReference type="Proteomes" id="UP000002588">
    <property type="component" value="Chromosome"/>
</dbReference>
<dbReference type="GO" id="GO:0005886">
    <property type="term" value="C:plasma membrane"/>
    <property type="evidence" value="ECO:0007669"/>
    <property type="project" value="TreeGrafter"/>
</dbReference>
<dbReference type="GO" id="GO:0005524">
    <property type="term" value="F:ATP binding"/>
    <property type="evidence" value="ECO:0007669"/>
    <property type="project" value="UniProtKB-UniRule"/>
</dbReference>
<dbReference type="GO" id="GO:0009029">
    <property type="term" value="F:tetraacyldisaccharide 4'-kinase activity"/>
    <property type="evidence" value="ECO:0007669"/>
    <property type="project" value="UniProtKB-UniRule"/>
</dbReference>
<dbReference type="GO" id="GO:0009245">
    <property type="term" value="P:lipid A biosynthetic process"/>
    <property type="evidence" value="ECO:0007669"/>
    <property type="project" value="UniProtKB-UniRule"/>
</dbReference>
<dbReference type="GO" id="GO:0009244">
    <property type="term" value="P:lipopolysaccharide core region biosynthetic process"/>
    <property type="evidence" value="ECO:0007669"/>
    <property type="project" value="TreeGrafter"/>
</dbReference>
<dbReference type="HAMAP" id="MF_00409">
    <property type="entry name" value="LpxK"/>
    <property type="match status" value="1"/>
</dbReference>
<dbReference type="InterPro" id="IPR003758">
    <property type="entry name" value="LpxK"/>
</dbReference>
<dbReference type="InterPro" id="IPR027417">
    <property type="entry name" value="P-loop_NTPase"/>
</dbReference>
<dbReference type="NCBIfam" id="TIGR00682">
    <property type="entry name" value="lpxK"/>
    <property type="match status" value="1"/>
</dbReference>
<dbReference type="PANTHER" id="PTHR42724">
    <property type="entry name" value="TETRAACYLDISACCHARIDE 4'-KINASE"/>
    <property type="match status" value="1"/>
</dbReference>
<dbReference type="PANTHER" id="PTHR42724:SF1">
    <property type="entry name" value="TETRAACYLDISACCHARIDE 4'-KINASE, MITOCHONDRIAL-RELATED"/>
    <property type="match status" value="1"/>
</dbReference>
<dbReference type="Pfam" id="PF02606">
    <property type="entry name" value="LpxK"/>
    <property type="match status" value="1"/>
</dbReference>
<dbReference type="SUPFAM" id="SSF52540">
    <property type="entry name" value="P-loop containing nucleoside triphosphate hydrolases"/>
    <property type="match status" value="1"/>
</dbReference>
<organism>
    <name type="scientific">Azoarcus sp. (strain BH72)</name>
    <dbReference type="NCBI Taxonomy" id="418699"/>
    <lineage>
        <taxon>Bacteria</taxon>
        <taxon>Pseudomonadati</taxon>
        <taxon>Pseudomonadota</taxon>
        <taxon>Betaproteobacteria</taxon>
        <taxon>Rhodocyclales</taxon>
        <taxon>Zoogloeaceae</taxon>
        <taxon>Azoarcus</taxon>
    </lineage>
</organism>